<comment type="function">
    <text evidence="4">Prenylcysteine oxidase that cleaves the thioether bond of prenyl-L-cysteines, such as farnesylcysteine and geranylgeranylcysteine (PubMed:9287348). Only active against free prenylcysteines and not prenylcysteine residues within prenylated proteins or peptides (PubMed:9287348). Involved in the final step in the degradation of prenylated proteins, by degrading prenylcysteines after the protein has been degraded (PubMed:9287348).</text>
</comment>
<comment type="catalytic activity">
    <reaction evidence="4">
        <text>an S-polyprenyl-L-cysteine + O2 + H2O = a polyprenal + L-cysteine + H2O2</text>
        <dbReference type="Rhea" id="RHEA:53892"/>
        <dbReference type="Rhea" id="RHEA-COMP:13675"/>
        <dbReference type="Rhea" id="RHEA-COMP:13676"/>
        <dbReference type="ChEBI" id="CHEBI:15377"/>
        <dbReference type="ChEBI" id="CHEBI:15379"/>
        <dbReference type="ChEBI" id="CHEBI:16240"/>
        <dbReference type="ChEBI" id="CHEBI:35235"/>
        <dbReference type="ChEBI" id="CHEBI:137934"/>
        <dbReference type="ChEBI" id="CHEBI:137935"/>
        <dbReference type="EC" id="1.8.3.5"/>
    </reaction>
    <physiologicalReaction direction="left-to-right" evidence="4">
        <dbReference type="Rhea" id="RHEA:53893"/>
    </physiologicalReaction>
</comment>
<comment type="catalytic activity">
    <reaction evidence="4">
        <text>S-(2E,6E)-farnesyl-L-cysteine + O2 + H2O = (2E,6E)-farnesal + L-cysteine + H2O2</text>
        <dbReference type="Rhea" id="RHEA:30231"/>
        <dbReference type="ChEBI" id="CHEBI:15377"/>
        <dbReference type="ChEBI" id="CHEBI:15379"/>
        <dbReference type="ChEBI" id="CHEBI:15894"/>
        <dbReference type="ChEBI" id="CHEBI:16240"/>
        <dbReference type="ChEBI" id="CHEBI:35235"/>
        <dbReference type="ChEBI" id="CHEBI:62141"/>
        <dbReference type="EC" id="1.8.3.5"/>
    </reaction>
    <physiologicalReaction direction="left-to-right" evidence="4">
        <dbReference type="Rhea" id="RHEA:30232"/>
    </physiologicalReaction>
</comment>
<comment type="catalytic activity">
    <reaction evidence="4">
        <text>[(2E,6E,10E)-geranylgeranyl]-L-cysteine + O2 + H2O = (2E,6E,10E)-geranylgeranial + L-cysteine + H2O2</text>
        <dbReference type="Rhea" id="RHEA:70407"/>
        <dbReference type="ChEBI" id="CHEBI:15377"/>
        <dbReference type="ChEBI" id="CHEBI:15379"/>
        <dbReference type="ChEBI" id="CHEBI:16240"/>
        <dbReference type="ChEBI" id="CHEBI:35235"/>
        <dbReference type="ChEBI" id="CHEBI:189549"/>
        <dbReference type="ChEBI" id="CHEBI:189554"/>
        <dbReference type="EC" id="1.8.3.5"/>
    </reaction>
    <physiologicalReaction direction="left-to-right" evidence="4">
        <dbReference type="Rhea" id="RHEA:70408"/>
    </physiologicalReaction>
</comment>
<comment type="cofactor">
    <cofactor evidence="1">
        <name>FAD</name>
        <dbReference type="ChEBI" id="CHEBI:57692"/>
    </cofactor>
</comment>
<comment type="biophysicochemical properties">
    <kinetics>
        <KM evidence="4">0.69 uM for free farnesylcysteine</KM>
        <KM evidence="4">0.84 uM for free geranylgeranylcysteine</KM>
        <Vmax evidence="4">3910.0 nmol/h/mg enzyme with free farnesylcysteine as substrate</Vmax>
        <Vmax evidence="4">1790.0 nmol/h/mg enzyme with free geranylgeranylcysteine as substrate</Vmax>
    </kinetics>
</comment>
<comment type="subcellular location">
    <subcellularLocation>
        <location evidence="1">Lysosome</location>
    </subcellularLocation>
</comment>
<comment type="similarity">
    <text evidence="6">Belongs to the prenylcysteine oxidase family.</text>
</comment>
<protein>
    <recommendedName>
        <fullName evidence="6">Prenylcysteine oxidase 1</fullName>
        <ecNumber evidence="4">1.8.3.5</ecNumber>
    </recommendedName>
    <alternativeName>
        <fullName evidence="5">Prenylcysteine lyase</fullName>
    </alternativeName>
</protein>
<dbReference type="EC" id="1.8.3.5" evidence="4"/>
<dbReference type="EMBL" id="BC149440">
    <property type="protein sequence ID" value="AAI49441.1"/>
    <property type="molecule type" value="mRNA"/>
</dbReference>
<dbReference type="RefSeq" id="NP_001098944.1">
    <property type="nucleotide sequence ID" value="NM_001105474.2"/>
</dbReference>
<dbReference type="SMR" id="F1N2K1"/>
<dbReference type="FunCoup" id="F1N2K1">
    <property type="interactions" value="2379"/>
</dbReference>
<dbReference type="STRING" id="9913.ENSBTAP00000042008"/>
<dbReference type="GlyCosmos" id="F1N2K1">
    <property type="glycosylation" value="3 sites, No reported glycans"/>
</dbReference>
<dbReference type="GlyGen" id="F1N2K1">
    <property type="glycosylation" value="3 sites"/>
</dbReference>
<dbReference type="PaxDb" id="9913-ENSBTAP00000042008"/>
<dbReference type="Ensembl" id="ENSBTAT00000044517.5">
    <property type="protein sequence ID" value="ENSBTAP00000042008.3"/>
    <property type="gene ID" value="ENSBTAG00000002783.7"/>
</dbReference>
<dbReference type="GeneID" id="100125835"/>
<dbReference type="KEGG" id="bta:100125835"/>
<dbReference type="CTD" id="51449"/>
<dbReference type="VEuPathDB" id="HostDB:ENSBTAG00000002783"/>
<dbReference type="VGNC" id="VGNC:32650">
    <property type="gene designation" value="PCYOX1"/>
</dbReference>
<dbReference type="eggNOG" id="ENOG502QSHJ">
    <property type="taxonomic scope" value="Eukaryota"/>
</dbReference>
<dbReference type="GeneTree" id="ENSGT00390000011206"/>
<dbReference type="HOGENOM" id="CLU_021176_1_0_1"/>
<dbReference type="InParanoid" id="F1N2K1"/>
<dbReference type="OMA" id="SIGIWDG"/>
<dbReference type="OrthoDB" id="437369at2759"/>
<dbReference type="TreeFam" id="TF329001"/>
<dbReference type="Proteomes" id="UP000009136">
    <property type="component" value="Chromosome 11"/>
</dbReference>
<dbReference type="Bgee" id="ENSBTAG00000002783">
    <property type="expression patterns" value="Expressed in oviduct epithelium and 107 other cell types or tissues"/>
</dbReference>
<dbReference type="GO" id="GO:0005764">
    <property type="term" value="C:lysosome"/>
    <property type="evidence" value="ECO:0007669"/>
    <property type="project" value="UniProtKB-SubCell"/>
</dbReference>
<dbReference type="GO" id="GO:0001735">
    <property type="term" value="F:prenylcysteine oxidase activity"/>
    <property type="evidence" value="ECO:0000314"/>
    <property type="project" value="UniProtKB"/>
</dbReference>
<dbReference type="GO" id="GO:0030327">
    <property type="term" value="P:prenylated protein catabolic process"/>
    <property type="evidence" value="ECO:0000318"/>
    <property type="project" value="GO_Central"/>
</dbReference>
<dbReference type="GO" id="GO:0030328">
    <property type="term" value="P:prenylcysteine catabolic process"/>
    <property type="evidence" value="ECO:0000314"/>
    <property type="project" value="UniProtKB"/>
</dbReference>
<dbReference type="FunFam" id="3.50.50.60:FF:000081">
    <property type="entry name" value="prenylcysteine oxidase 1"/>
    <property type="match status" value="1"/>
</dbReference>
<dbReference type="Gene3D" id="3.50.50.60">
    <property type="entry name" value="FAD/NAD(P)-binding domain"/>
    <property type="match status" value="1"/>
</dbReference>
<dbReference type="InterPro" id="IPR036188">
    <property type="entry name" value="FAD/NAD-bd_sf"/>
</dbReference>
<dbReference type="InterPro" id="IPR010795">
    <property type="entry name" value="Prenylcys_lyase"/>
</dbReference>
<dbReference type="InterPro" id="IPR017046">
    <property type="entry name" value="Prenylcysteine_Oxase1"/>
</dbReference>
<dbReference type="PANTHER" id="PTHR15944">
    <property type="entry name" value="FARNESYLCYSTEINE LYASE"/>
    <property type="match status" value="1"/>
</dbReference>
<dbReference type="PANTHER" id="PTHR15944:SF3">
    <property type="entry name" value="PRENYLCYSTEINE OXIDASE 1"/>
    <property type="match status" value="1"/>
</dbReference>
<dbReference type="Pfam" id="PF13450">
    <property type="entry name" value="NAD_binding_8"/>
    <property type="match status" value="1"/>
</dbReference>
<dbReference type="Pfam" id="PF07156">
    <property type="entry name" value="Prenylcys_lyase"/>
    <property type="match status" value="1"/>
</dbReference>
<dbReference type="PIRSF" id="PIRSF036292">
    <property type="entry name" value="Prenylcysteine_oxidase"/>
    <property type="match status" value="1"/>
</dbReference>
<dbReference type="SUPFAM" id="SSF51905">
    <property type="entry name" value="FAD/NAD(P)-binding domain"/>
    <property type="match status" value="1"/>
</dbReference>
<feature type="signal peptide" evidence="3">
    <location>
        <begin position="1"/>
        <end position="31"/>
    </location>
</feature>
<feature type="chain" id="PRO_5003269986" description="Prenylcysteine oxidase 1">
    <location>
        <begin position="32"/>
        <end position="508"/>
    </location>
</feature>
<feature type="glycosylation site" description="N-linked (GlcNAc...) asparagine" evidence="2">
    <location>
        <position position="199"/>
    </location>
</feature>
<feature type="glycosylation site" description="N-linked (GlcNAc...) asparagine" evidence="2">
    <location>
        <position position="291"/>
    </location>
</feature>
<feature type="glycosylation site" description="N-linked (GlcNAc...) asparagine" evidence="2">
    <location>
        <position position="356"/>
    </location>
</feature>
<feature type="sequence conflict" description="In Ref. 3; AA sequence." evidence="6" ref="3">
    <original>R</original>
    <variation>Y</variation>
    <location>
        <position position="34"/>
    </location>
</feature>
<feature type="sequence conflict" description="In Ref. 2; AAI49441." evidence="6" ref="2">
    <original>F</original>
    <variation>Y</variation>
    <location>
        <position position="105"/>
    </location>
</feature>
<name>PCYOX_BOVIN</name>
<reference key="1">
    <citation type="journal article" date="2009" name="Genome Biol.">
        <title>A whole-genome assembly of the domestic cow, Bos taurus.</title>
        <authorList>
            <person name="Zimin A.V."/>
            <person name="Delcher A.L."/>
            <person name="Florea L."/>
            <person name="Kelley D.R."/>
            <person name="Schatz M.C."/>
            <person name="Puiu D."/>
            <person name="Hanrahan F."/>
            <person name="Pertea G."/>
            <person name="Van Tassell C.P."/>
            <person name="Sonstegard T.S."/>
            <person name="Marcais G."/>
            <person name="Roberts M."/>
            <person name="Subramanian P."/>
            <person name="Yorke J.A."/>
            <person name="Salzberg S.L."/>
        </authorList>
    </citation>
    <scope>NUCLEOTIDE SEQUENCE [LARGE SCALE GENOMIC DNA]</scope>
    <source>
        <strain>Hereford</strain>
    </source>
</reference>
<reference key="2">
    <citation type="submission" date="2007-07" db="EMBL/GenBank/DDBJ databases">
        <authorList>
            <consortium name="NIH - Mammalian Gene Collection (MGC) project"/>
        </authorList>
    </citation>
    <scope>NUCLEOTIDE SEQUENCE [LARGE SCALE MRNA]</scope>
</reference>
<reference key="3">
    <citation type="journal article" date="1999" name="J. Biol. Chem.">
        <title>Cloning, expression, and cellular localization of a human prenylcysteine lyase.</title>
        <authorList>
            <person name="Tschantz W.R."/>
            <person name="Zhang L."/>
            <person name="Casey P.J."/>
        </authorList>
    </citation>
    <scope>PROTEIN SEQUENCE OF 32-57; 172-184; 215-225; 383-390 AND 402-409</scope>
</reference>
<reference key="4">
    <citation type="journal article" date="1997" name="J. Biol. Chem.">
        <title>Isolation and characterization of a prenylcysteine lyase from bovine brain.</title>
        <authorList>
            <person name="Zhang L."/>
            <person name="Tschantz W.R."/>
            <person name="Casey P.J."/>
        </authorList>
    </citation>
    <scope>FUNCTION</scope>
    <scope>CATALYTIC ACTIVITY</scope>
    <scope>BIOPHYSICOCHEMICAL PROPERTIES</scope>
</reference>
<keyword id="KW-0903">Direct protein sequencing</keyword>
<keyword id="KW-0274">FAD</keyword>
<keyword id="KW-0285">Flavoprotein</keyword>
<keyword id="KW-0325">Glycoprotein</keyword>
<keyword id="KW-0458">Lysosome</keyword>
<keyword id="KW-0560">Oxidoreductase</keyword>
<keyword id="KW-1185">Reference proteome</keyword>
<keyword id="KW-0732">Signal</keyword>
<gene>
    <name evidence="1" type="primary">PCYOX1</name>
</gene>
<organism>
    <name type="scientific">Bos taurus</name>
    <name type="common">Bovine</name>
    <dbReference type="NCBI Taxonomy" id="9913"/>
    <lineage>
        <taxon>Eukaryota</taxon>
        <taxon>Metazoa</taxon>
        <taxon>Chordata</taxon>
        <taxon>Craniata</taxon>
        <taxon>Vertebrata</taxon>
        <taxon>Euteleostomi</taxon>
        <taxon>Mammalia</taxon>
        <taxon>Eutheria</taxon>
        <taxon>Laurasiatheria</taxon>
        <taxon>Artiodactyla</taxon>
        <taxon>Ruminantia</taxon>
        <taxon>Pecora</taxon>
        <taxon>Bovidae</taxon>
        <taxon>Bovinae</taxon>
        <taxon>Bos</taxon>
    </lineage>
</organism>
<proteinExistence type="evidence at protein level"/>
<accession>F1N2K1</accession>
<accession>A6QPR1</accession>
<evidence type="ECO:0000250" key="1">
    <source>
        <dbReference type="UniProtKB" id="Q9UHG3"/>
    </source>
</evidence>
<evidence type="ECO:0000255" key="2"/>
<evidence type="ECO:0000269" key="3">
    <source>
    </source>
</evidence>
<evidence type="ECO:0000269" key="4">
    <source>
    </source>
</evidence>
<evidence type="ECO:0000303" key="5">
    <source>
    </source>
</evidence>
<evidence type="ECO:0000305" key="6"/>
<sequence length="508" mass="56776">MDPAAPGLACSILRLGLGLLLLCSWWYPGSAEPRAPPEKIAVIGAGIGGTSAAYYLRQKFGKDVKIDVFEKGKVGGRLATLNVQGQEFESGGSVIHPLNLHMKRFVKDLGLSAVQSPSGLVGVYNGETLVYEESSWFIINMIKLIWHYGFQSLRMHMWVEDILDKFMRIYRYQSHDYAFSSVEKLLHSLGGDDYLGLFNRSLLETLQKAGFSEKFLDEIITPVMRVNYGQTTNINGFVGAVSMAGTDPGLWAVKGGNKLVCSRLLQASRSNLVSGLVMSIEEKTRTKQTGNPSKVYEVVYQTGSETHSDFYDIVLVATPLNRKMSNINFLNFDPPIEEFHQHYEPLVTTLIKGELNSTVFSSRALNEFHLGTVLTTDNPDLFINSIGLVSPVEEDNNPQPKADTAHVWKIFSAAALTKEQILKLFVSYDYAVKQSWLAYPHYTPPEKCPSIILHDQLYYLNGIEFAASAMEMSAIAGYNAALLAYHRWNGNTHMIDQEDLYERLKTEL</sequence>